<accession>Q1GTK0</accession>
<reference key="1">
    <citation type="journal article" date="2009" name="Proc. Natl. Acad. Sci. U.S.A.">
        <title>The genomic basis of trophic strategy in marine bacteria.</title>
        <authorList>
            <person name="Lauro F.M."/>
            <person name="McDougald D."/>
            <person name="Thomas T."/>
            <person name="Williams T.J."/>
            <person name="Egan S."/>
            <person name="Rice S."/>
            <person name="DeMaere M.Z."/>
            <person name="Ting L."/>
            <person name="Ertan H."/>
            <person name="Johnson J."/>
            <person name="Ferriera S."/>
            <person name="Lapidus A."/>
            <person name="Anderson I."/>
            <person name="Kyrpides N."/>
            <person name="Munk A.C."/>
            <person name="Detter C."/>
            <person name="Han C.S."/>
            <person name="Brown M.V."/>
            <person name="Robb F.T."/>
            <person name="Kjelleberg S."/>
            <person name="Cavicchioli R."/>
        </authorList>
    </citation>
    <scope>NUCLEOTIDE SEQUENCE [LARGE SCALE GENOMIC DNA]</scope>
    <source>
        <strain>DSM 13593 / LMG 18877 / RB2256</strain>
    </source>
</reference>
<comment type="function">
    <text evidence="1">NDH-1 shuttles electrons from NADH, via FMN and iron-sulfur (Fe-S) centers, to quinones in the respiratory chain. The immediate electron acceptor for the enzyme in this species is believed to be ubiquinone. Couples the redox reaction to proton translocation (for every two electrons transferred, four hydrogen ions are translocated across the cytoplasmic membrane), and thus conserves the redox energy in a proton gradient.</text>
</comment>
<comment type="catalytic activity">
    <reaction evidence="1">
        <text>a quinone + NADH + 5 H(+)(in) = a quinol + NAD(+) + 4 H(+)(out)</text>
        <dbReference type="Rhea" id="RHEA:57888"/>
        <dbReference type="ChEBI" id="CHEBI:15378"/>
        <dbReference type="ChEBI" id="CHEBI:24646"/>
        <dbReference type="ChEBI" id="CHEBI:57540"/>
        <dbReference type="ChEBI" id="CHEBI:57945"/>
        <dbReference type="ChEBI" id="CHEBI:132124"/>
    </reaction>
</comment>
<comment type="subunit">
    <text evidence="1">NDH-1 is composed of 14 different subunits. Subunits NuoB, C, D, E, F, and G constitute the peripheral sector of the complex.</text>
</comment>
<comment type="subcellular location">
    <subcellularLocation>
        <location evidence="1">Cell inner membrane</location>
        <topology evidence="1">Peripheral membrane protein</topology>
        <orientation evidence="1">Cytoplasmic side</orientation>
    </subcellularLocation>
</comment>
<comment type="similarity">
    <text evidence="1">Belongs to the complex I 49 kDa subunit family.</text>
</comment>
<comment type="sequence caution" evidence="2">
    <conflict type="erroneous initiation">
        <sequence resource="EMBL-CDS" id="ABF53022"/>
    </conflict>
</comment>
<sequence length="405" mass="45702">MFEGYPVDTANTAGDQAVTNYTINFGPQHPAAHGVLRMVMELDGEIIERVDPHVGLLHRGTEKLIEYKTYLQALPYFDRLDYCSPLGMEHSYVLAIEKLLDLEVPARAQYLRTMFAELTRICNHMLNIGSHVMDVGAMTPNLWVFELREDCLNFFERASGARMHSAYFRPGGVHQDVPEKLLVDIGEWVETRLPKLFGDAMSLVIDNRIFKQRNVDIATVSKEDALAWGFSGPMIRGSGIAWDLRKSQPYDAYAAMEFDIPVGTRGDCYDRFMVRVEEVYQSAKIIKQCLRDMPTGPIASLDRKVVPPKRGEMKQSMESLIHHFKLYTEGFHVPAGEVYVATESPKGEFGVYLVSDGTNKPYRCKIRPTAFSHLQAMDMMSKGHMLADTTAIIGAIDVVFGECDR</sequence>
<name>NUOD_SPHAL</name>
<evidence type="ECO:0000255" key="1">
    <source>
        <dbReference type="HAMAP-Rule" id="MF_01358"/>
    </source>
</evidence>
<evidence type="ECO:0000305" key="2"/>
<feature type="chain" id="PRO_0000357935" description="NADH-quinone oxidoreductase subunit D">
    <location>
        <begin position="1"/>
        <end position="405"/>
    </location>
</feature>
<gene>
    <name evidence="1" type="primary">nuoD</name>
    <name type="ordered locus">Sala_1308</name>
</gene>
<proteinExistence type="inferred from homology"/>
<protein>
    <recommendedName>
        <fullName evidence="1">NADH-quinone oxidoreductase subunit D</fullName>
        <ecNumber evidence="1">7.1.1.-</ecNumber>
    </recommendedName>
    <alternativeName>
        <fullName evidence="1">NADH dehydrogenase I subunit D</fullName>
    </alternativeName>
    <alternativeName>
        <fullName evidence="1">NDH-1 subunit D</fullName>
    </alternativeName>
</protein>
<organism>
    <name type="scientific">Sphingopyxis alaskensis (strain DSM 13593 / LMG 18877 / RB2256)</name>
    <name type="common">Sphingomonas alaskensis</name>
    <dbReference type="NCBI Taxonomy" id="317655"/>
    <lineage>
        <taxon>Bacteria</taxon>
        <taxon>Pseudomonadati</taxon>
        <taxon>Pseudomonadota</taxon>
        <taxon>Alphaproteobacteria</taxon>
        <taxon>Sphingomonadales</taxon>
        <taxon>Sphingomonadaceae</taxon>
        <taxon>Sphingopyxis</taxon>
    </lineage>
</organism>
<keyword id="KW-0997">Cell inner membrane</keyword>
<keyword id="KW-1003">Cell membrane</keyword>
<keyword id="KW-0472">Membrane</keyword>
<keyword id="KW-0520">NAD</keyword>
<keyword id="KW-0874">Quinone</keyword>
<keyword id="KW-1185">Reference proteome</keyword>
<keyword id="KW-1278">Translocase</keyword>
<keyword id="KW-0813">Transport</keyword>
<keyword id="KW-0830">Ubiquinone</keyword>
<dbReference type="EC" id="7.1.1.-" evidence="1"/>
<dbReference type="EMBL" id="CP000356">
    <property type="protein sequence ID" value="ABF53022.1"/>
    <property type="status" value="ALT_INIT"/>
    <property type="molecule type" value="Genomic_DNA"/>
</dbReference>
<dbReference type="RefSeq" id="WP_192807465.1">
    <property type="nucleotide sequence ID" value="NC_008048.1"/>
</dbReference>
<dbReference type="SMR" id="Q1GTK0"/>
<dbReference type="STRING" id="317655.Sala_1308"/>
<dbReference type="KEGG" id="sal:Sala_1308"/>
<dbReference type="eggNOG" id="COG0649">
    <property type="taxonomic scope" value="Bacteria"/>
</dbReference>
<dbReference type="HOGENOM" id="CLU_015134_1_1_5"/>
<dbReference type="Proteomes" id="UP000006578">
    <property type="component" value="Chromosome"/>
</dbReference>
<dbReference type="GO" id="GO:0005886">
    <property type="term" value="C:plasma membrane"/>
    <property type="evidence" value="ECO:0007669"/>
    <property type="project" value="UniProtKB-SubCell"/>
</dbReference>
<dbReference type="GO" id="GO:0051287">
    <property type="term" value="F:NAD binding"/>
    <property type="evidence" value="ECO:0007669"/>
    <property type="project" value="InterPro"/>
</dbReference>
<dbReference type="GO" id="GO:0050136">
    <property type="term" value="F:NADH:ubiquinone reductase (non-electrogenic) activity"/>
    <property type="evidence" value="ECO:0007669"/>
    <property type="project" value="UniProtKB-UniRule"/>
</dbReference>
<dbReference type="GO" id="GO:0048038">
    <property type="term" value="F:quinone binding"/>
    <property type="evidence" value="ECO:0007669"/>
    <property type="project" value="UniProtKB-KW"/>
</dbReference>
<dbReference type="FunFam" id="1.10.645.10:FF:000005">
    <property type="entry name" value="NADH-quinone oxidoreductase subunit D"/>
    <property type="match status" value="1"/>
</dbReference>
<dbReference type="Gene3D" id="1.10.645.10">
    <property type="entry name" value="Cytochrome-c3 Hydrogenase, chain B"/>
    <property type="match status" value="1"/>
</dbReference>
<dbReference type="HAMAP" id="MF_01358">
    <property type="entry name" value="NDH1_NuoD"/>
    <property type="match status" value="1"/>
</dbReference>
<dbReference type="InterPro" id="IPR001135">
    <property type="entry name" value="NADH_Q_OxRdtase_suD"/>
</dbReference>
<dbReference type="InterPro" id="IPR014029">
    <property type="entry name" value="NADH_UbQ_OxRdtase_49kDa_CS"/>
</dbReference>
<dbReference type="InterPro" id="IPR022885">
    <property type="entry name" value="NDH1_su_D/H"/>
</dbReference>
<dbReference type="InterPro" id="IPR029014">
    <property type="entry name" value="NiFe-Hase_large"/>
</dbReference>
<dbReference type="NCBIfam" id="TIGR01962">
    <property type="entry name" value="NuoD"/>
    <property type="match status" value="1"/>
</dbReference>
<dbReference type="NCBIfam" id="NF004739">
    <property type="entry name" value="PRK06075.1"/>
    <property type="match status" value="1"/>
</dbReference>
<dbReference type="PANTHER" id="PTHR11993:SF10">
    <property type="entry name" value="NADH DEHYDROGENASE [UBIQUINONE] IRON-SULFUR PROTEIN 2, MITOCHONDRIAL"/>
    <property type="match status" value="1"/>
</dbReference>
<dbReference type="PANTHER" id="PTHR11993">
    <property type="entry name" value="NADH-UBIQUINONE OXIDOREDUCTASE 49 KDA SUBUNIT"/>
    <property type="match status" value="1"/>
</dbReference>
<dbReference type="Pfam" id="PF00346">
    <property type="entry name" value="Complex1_49kDa"/>
    <property type="match status" value="1"/>
</dbReference>
<dbReference type="SUPFAM" id="SSF56762">
    <property type="entry name" value="HydB/Nqo4-like"/>
    <property type="match status" value="1"/>
</dbReference>
<dbReference type="PROSITE" id="PS00535">
    <property type="entry name" value="COMPLEX1_49K"/>
    <property type="match status" value="1"/>
</dbReference>